<proteinExistence type="inferred from homology"/>
<accession>Q92KX3</accession>
<name>HTPX_RHIME</name>
<gene>
    <name evidence="1" type="primary">htpX</name>
    <name type="ordered locus">R03325</name>
    <name type="ORF">SMc04091</name>
</gene>
<reference key="1">
    <citation type="journal article" date="2001" name="Proc. Natl. Acad. Sci. U.S.A.">
        <title>Analysis of the chromosome sequence of the legume symbiont Sinorhizobium meliloti strain 1021.</title>
        <authorList>
            <person name="Capela D."/>
            <person name="Barloy-Hubler F."/>
            <person name="Gouzy J."/>
            <person name="Bothe G."/>
            <person name="Ampe F."/>
            <person name="Batut J."/>
            <person name="Boistard P."/>
            <person name="Becker A."/>
            <person name="Boutry M."/>
            <person name="Cadieu E."/>
            <person name="Dreano S."/>
            <person name="Gloux S."/>
            <person name="Godrie T."/>
            <person name="Goffeau A."/>
            <person name="Kahn D."/>
            <person name="Kiss E."/>
            <person name="Lelaure V."/>
            <person name="Masuy D."/>
            <person name="Pohl T."/>
            <person name="Portetelle D."/>
            <person name="Puehler A."/>
            <person name="Purnelle B."/>
            <person name="Ramsperger U."/>
            <person name="Renard C."/>
            <person name="Thebault P."/>
            <person name="Vandenbol M."/>
            <person name="Weidner S."/>
            <person name="Galibert F."/>
        </authorList>
    </citation>
    <scope>NUCLEOTIDE SEQUENCE [LARGE SCALE GENOMIC DNA]</scope>
    <source>
        <strain>1021</strain>
    </source>
</reference>
<reference key="2">
    <citation type="journal article" date="2001" name="Science">
        <title>The composite genome of the legume symbiont Sinorhizobium meliloti.</title>
        <authorList>
            <person name="Galibert F."/>
            <person name="Finan T.M."/>
            <person name="Long S.R."/>
            <person name="Puehler A."/>
            <person name="Abola P."/>
            <person name="Ampe F."/>
            <person name="Barloy-Hubler F."/>
            <person name="Barnett M.J."/>
            <person name="Becker A."/>
            <person name="Boistard P."/>
            <person name="Bothe G."/>
            <person name="Boutry M."/>
            <person name="Bowser L."/>
            <person name="Buhrmester J."/>
            <person name="Cadieu E."/>
            <person name="Capela D."/>
            <person name="Chain P."/>
            <person name="Cowie A."/>
            <person name="Davis R.W."/>
            <person name="Dreano S."/>
            <person name="Federspiel N.A."/>
            <person name="Fisher R.F."/>
            <person name="Gloux S."/>
            <person name="Godrie T."/>
            <person name="Goffeau A."/>
            <person name="Golding B."/>
            <person name="Gouzy J."/>
            <person name="Gurjal M."/>
            <person name="Hernandez-Lucas I."/>
            <person name="Hong A."/>
            <person name="Huizar L."/>
            <person name="Hyman R.W."/>
            <person name="Jones T."/>
            <person name="Kahn D."/>
            <person name="Kahn M.L."/>
            <person name="Kalman S."/>
            <person name="Keating D.H."/>
            <person name="Kiss E."/>
            <person name="Komp C."/>
            <person name="Lelaure V."/>
            <person name="Masuy D."/>
            <person name="Palm C."/>
            <person name="Peck M.C."/>
            <person name="Pohl T.M."/>
            <person name="Portetelle D."/>
            <person name="Purnelle B."/>
            <person name="Ramsperger U."/>
            <person name="Surzycki R."/>
            <person name="Thebault P."/>
            <person name="Vandenbol M."/>
            <person name="Vorhoelter F.J."/>
            <person name="Weidner S."/>
            <person name="Wells D.H."/>
            <person name="Wong K."/>
            <person name="Yeh K.-C."/>
            <person name="Batut J."/>
        </authorList>
    </citation>
    <scope>NUCLEOTIDE SEQUENCE [LARGE SCALE GENOMIC DNA]</scope>
    <source>
        <strain>1021</strain>
    </source>
</reference>
<dbReference type="EC" id="3.4.24.-" evidence="1"/>
<dbReference type="EMBL" id="AL591688">
    <property type="protein sequence ID" value="CAC47904.1"/>
    <property type="molecule type" value="Genomic_DNA"/>
</dbReference>
<dbReference type="RefSeq" id="NP_387431.1">
    <property type="nucleotide sequence ID" value="NC_003047.1"/>
</dbReference>
<dbReference type="RefSeq" id="WP_003531758.1">
    <property type="nucleotide sequence ID" value="NC_003047.1"/>
</dbReference>
<dbReference type="EnsemblBacteria" id="CAC47904">
    <property type="protein sequence ID" value="CAC47904"/>
    <property type="gene ID" value="SMc04091"/>
</dbReference>
<dbReference type="GeneID" id="89574299"/>
<dbReference type="KEGG" id="sme:SMc04091"/>
<dbReference type="PATRIC" id="fig|266834.11.peg.4886"/>
<dbReference type="eggNOG" id="COG0501">
    <property type="taxonomic scope" value="Bacteria"/>
</dbReference>
<dbReference type="HOGENOM" id="CLU_042266_3_0_5"/>
<dbReference type="OrthoDB" id="15218at2"/>
<dbReference type="Proteomes" id="UP000001976">
    <property type="component" value="Chromosome"/>
</dbReference>
<dbReference type="GO" id="GO:0005886">
    <property type="term" value="C:plasma membrane"/>
    <property type="evidence" value="ECO:0007669"/>
    <property type="project" value="UniProtKB-SubCell"/>
</dbReference>
<dbReference type="GO" id="GO:0004222">
    <property type="term" value="F:metalloendopeptidase activity"/>
    <property type="evidence" value="ECO:0007669"/>
    <property type="project" value="UniProtKB-UniRule"/>
</dbReference>
<dbReference type="GO" id="GO:0008270">
    <property type="term" value="F:zinc ion binding"/>
    <property type="evidence" value="ECO:0007669"/>
    <property type="project" value="UniProtKB-UniRule"/>
</dbReference>
<dbReference type="GO" id="GO:0006508">
    <property type="term" value="P:proteolysis"/>
    <property type="evidence" value="ECO:0007669"/>
    <property type="project" value="UniProtKB-KW"/>
</dbReference>
<dbReference type="CDD" id="cd07336">
    <property type="entry name" value="M48B_HtpX_like"/>
    <property type="match status" value="1"/>
</dbReference>
<dbReference type="Gene3D" id="3.30.2010.10">
    <property type="entry name" value="Metalloproteases ('zincins'), catalytic domain"/>
    <property type="match status" value="1"/>
</dbReference>
<dbReference type="HAMAP" id="MF_00188">
    <property type="entry name" value="Pept_M48_protease_HtpX"/>
    <property type="match status" value="1"/>
</dbReference>
<dbReference type="InterPro" id="IPR050083">
    <property type="entry name" value="HtpX_protease"/>
</dbReference>
<dbReference type="InterPro" id="IPR022919">
    <property type="entry name" value="Pept_M48_protease_HtpX"/>
</dbReference>
<dbReference type="InterPro" id="IPR001915">
    <property type="entry name" value="Peptidase_M48"/>
</dbReference>
<dbReference type="NCBIfam" id="NF002363">
    <property type="entry name" value="PRK01345.1"/>
    <property type="match status" value="1"/>
</dbReference>
<dbReference type="NCBIfam" id="NF002826">
    <property type="entry name" value="PRK03001.1"/>
    <property type="match status" value="1"/>
</dbReference>
<dbReference type="PANTHER" id="PTHR43221">
    <property type="entry name" value="PROTEASE HTPX"/>
    <property type="match status" value="1"/>
</dbReference>
<dbReference type="PANTHER" id="PTHR43221:SF1">
    <property type="entry name" value="PROTEASE HTPX"/>
    <property type="match status" value="1"/>
</dbReference>
<dbReference type="Pfam" id="PF01435">
    <property type="entry name" value="Peptidase_M48"/>
    <property type="match status" value="1"/>
</dbReference>
<dbReference type="PROSITE" id="PS00142">
    <property type="entry name" value="ZINC_PROTEASE"/>
    <property type="match status" value="1"/>
</dbReference>
<feature type="chain" id="PRO_0000138885" description="Protease HtpX homolog">
    <location>
        <begin position="1"/>
        <end position="319"/>
    </location>
</feature>
<feature type="transmembrane region" description="Helical" evidence="1">
    <location>
        <begin position="6"/>
        <end position="26"/>
    </location>
</feature>
<feature type="transmembrane region" description="Helical" evidence="1">
    <location>
        <begin position="28"/>
        <end position="48"/>
    </location>
</feature>
<feature type="transmembrane region" description="Helical" evidence="1">
    <location>
        <begin position="145"/>
        <end position="165"/>
    </location>
</feature>
<feature type="transmembrane region" description="Helical" evidence="1">
    <location>
        <begin position="172"/>
        <end position="192"/>
    </location>
</feature>
<feature type="region of interest" description="Disordered" evidence="2">
    <location>
        <begin position="277"/>
        <end position="319"/>
    </location>
</feature>
<feature type="active site" evidence="1">
    <location>
        <position position="131"/>
    </location>
</feature>
<feature type="binding site" evidence="1">
    <location>
        <position position="130"/>
    </location>
    <ligand>
        <name>Zn(2+)</name>
        <dbReference type="ChEBI" id="CHEBI:29105"/>
        <note>catalytic</note>
    </ligand>
</feature>
<feature type="binding site" evidence="1">
    <location>
        <position position="134"/>
    </location>
    <ligand>
        <name>Zn(2+)</name>
        <dbReference type="ChEBI" id="CHEBI:29105"/>
        <note>catalytic</note>
    </ligand>
</feature>
<feature type="binding site" evidence="1">
    <location>
        <position position="201"/>
    </location>
    <ligand>
        <name>Zn(2+)</name>
        <dbReference type="ChEBI" id="CHEBI:29105"/>
        <note>catalytic</note>
    </ligand>
</feature>
<comment type="cofactor">
    <cofactor evidence="1">
        <name>Zn(2+)</name>
        <dbReference type="ChEBI" id="CHEBI:29105"/>
    </cofactor>
    <text evidence="1">Binds 1 zinc ion per subunit.</text>
</comment>
<comment type="subcellular location">
    <subcellularLocation>
        <location evidence="1">Cell inner membrane</location>
        <topology evidence="1">Multi-pass membrane protein</topology>
    </subcellularLocation>
</comment>
<comment type="similarity">
    <text evidence="1">Belongs to the peptidase M48B family.</text>
</comment>
<sequence>MNLMRTAMLLAFMTVLFMAVGYVIGGRGGMMIALVIAAGMNFFSYWNSDRMVLRMYRAQEVDEHSAPEYYGIVRDLAKNAGLPMPRVYVIDSPQPNAFATGRNPENAAVAASTGLLHSLSYEEVAGVMAHELAHIQYRDTLTMTLTATLAGAISMLGNFAFFFGGNRENNNPLGFIGVLIAMIVAPLAAMLVQMAISRTREYSADRRGAEICGNPLWLSSALRKIAGAAQVIHNNDAERNPATAHMFIINPLSGERMDNLFSTHPNTENRVAALERMARETSTGSTAPVRPDNAGRKSRSVPRTGWGRGGSEPPKGPWS</sequence>
<organism>
    <name type="scientific">Rhizobium meliloti (strain 1021)</name>
    <name type="common">Ensifer meliloti</name>
    <name type="synonym">Sinorhizobium meliloti</name>
    <dbReference type="NCBI Taxonomy" id="266834"/>
    <lineage>
        <taxon>Bacteria</taxon>
        <taxon>Pseudomonadati</taxon>
        <taxon>Pseudomonadota</taxon>
        <taxon>Alphaproteobacteria</taxon>
        <taxon>Hyphomicrobiales</taxon>
        <taxon>Rhizobiaceae</taxon>
        <taxon>Sinorhizobium/Ensifer group</taxon>
        <taxon>Sinorhizobium</taxon>
    </lineage>
</organism>
<protein>
    <recommendedName>
        <fullName evidence="1">Protease HtpX homolog</fullName>
        <ecNumber evidence="1">3.4.24.-</ecNumber>
    </recommendedName>
</protein>
<keyword id="KW-0997">Cell inner membrane</keyword>
<keyword id="KW-1003">Cell membrane</keyword>
<keyword id="KW-0378">Hydrolase</keyword>
<keyword id="KW-0472">Membrane</keyword>
<keyword id="KW-0479">Metal-binding</keyword>
<keyword id="KW-0482">Metalloprotease</keyword>
<keyword id="KW-0645">Protease</keyword>
<keyword id="KW-1185">Reference proteome</keyword>
<keyword id="KW-0812">Transmembrane</keyword>
<keyword id="KW-1133">Transmembrane helix</keyword>
<keyword id="KW-0862">Zinc</keyword>
<evidence type="ECO:0000255" key="1">
    <source>
        <dbReference type="HAMAP-Rule" id="MF_00188"/>
    </source>
</evidence>
<evidence type="ECO:0000256" key="2">
    <source>
        <dbReference type="SAM" id="MobiDB-lite"/>
    </source>
</evidence>